<reference key="1">
    <citation type="journal article" date="2000" name="Nature">
        <title>Sequence and analysis of chromosome 1 of the plant Arabidopsis thaliana.</title>
        <authorList>
            <person name="Theologis A."/>
            <person name="Ecker J.R."/>
            <person name="Palm C.J."/>
            <person name="Federspiel N.A."/>
            <person name="Kaul S."/>
            <person name="White O."/>
            <person name="Alonso J."/>
            <person name="Altafi H."/>
            <person name="Araujo R."/>
            <person name="Bowman C.L."/>
            <person name="Brooks S.Y."/>
            <person name="Buehler E."/>
            <person name="Chan A."/>
            <person name="Chao Q."/>
            <person name="Chen H."/>
            <person name="Cheuk R.F."/>
            <person name="Chin C.W."/>
            <person name="Chung M.K."/>
            <person name="Conn L."/>
            <person name="Conway A.B."/>
            <person name="Conway A.R."/>
            <person name="Creasy T.H."/>
            <person name="Dewar K."/>
            <person name="Dunn P."/>
            <person name="Etgu P."/>
            <person name="Feldblyum T.V."/>
            <person name="Feng J.-D."/>
            <person name="Fong B."/>
            <person name="Fujii C.Y."/>
            <person name="Gill J.E."/>
            <person name="Goldsmith A.D."/>
            <person name="Haas B."/>
            <person name="Hansen N.F."/>
            <person name="Hughes B."/>
            <person name="Huizar L."/>
            <person name="Hunter J.L."/>
            <person name="Jenkins J."/>
            <person name="Johnson-Hopson C."/>
            <person name="Khan S."/>
            <person name="Khaykin E."/>
            <person name="Kim C.J."/>
            <person name="Koo H.L."/>
            <person name="Kremenetskaia I."/>
            <person name="Kurtz D.B."/>
            <person name="Kwan A."/>
            <person name="Lam B."/>
            <person name="Langin-Hooper S."/>
            <person name="Lee A."/>
            <person name="Lee J.M."/>
            <person name="Lenz C.A."/>
            <person name="Li J.H."/>
            <person name="Li Y.-P."/>
            <person name="Lin X."/>
            <person name="Liu S.X."/>
            <person name="Liu Z.A."/>
            <person name="Luros J.S."/>
            <person name="Maiti R."/>
            <person name="Marziali A."/>
            <person name="Militscher J."/>
            <person name="Miranda M."/>
            <person name="Nguyen M."/>
            <person name="Nierman W.C."/>
            <person name="Osborne B.I."/>
            <person name="Pai G."/>
            <person name="Peterson J."/>
            <person name="Pham P.K."/>
            <person name="Rizzo M."/>
            <person name="Rooney T."/>
            <person name="Rowley D."/>
            <person name="Sakano H."/>
            <person name="Salzberg S.L."/>
            <person name="Schwartz J.R."/>
            <person name="Shinn P."/>
            <person name="Southwick A.M."/>
            <person name="Sun H."/>
            <person name="Tallon L.J."/>
            <person name="Tambunga G."/>
            <person name="Toriumi M.J."/>
            <person name="Town C.D."/>
            <person name="Utterback T."/>
            <person name="Van Aken S."/>
            <person name="Vaysberg M."/>
            <person name="Vysotskaia V.S."/>
            <person name="Walker M."/>
            <person name="Wu D."/>
            <person name="Yu G."/>
            <person name="Fraser C.M."/>
            <person name="Venter J.C."/>
            <person name="Davis R.W."/>
        </authorList>
    </citation>
    <scope>NUCLEOTIDE SEQUENCE [LARGE SCALE GENOMIC DNA]</scope>
    <source>
        <strain>cv. Columbia</strain>
    </source>
</reference>
<reference key="2">
    <citation type="journal article" date="2017" name="Plant J.">
        <title>Araport11: a complete reannotation of the Arabidopsis thaliana reference genome.</title>
        <authorList>
            <person name="Cheng C.Y."/>
            <person name="Krishnakumar V."/>
            <person name="Chan A.P."/>
            <person name="Thibaud-Nissen F."/>
            <person name="Schobel S."/>
            <person name="Town C.D."/>
        </authorList>
    </citation>
    <scope>GENOME REANNOTATION</scope>
    <source>
        <strain>cv. Columbia</strain>
    </source>
</reference>
<reference key="3">
    <citation type="journal article" date="2003" name="Science">
        <title>Empirical analysis of transcriptional activity in the Arabidopsis genome.</title>
        <authorList>
            <person name="Yamada K."/>
            <person name="Lim J."/>
            <person name="Dale J.M."/>
            <person name="Chen H."/>
            <person name="Shinn P."/>
            <person name="Palm C.J."/>
            <person name="Southwick A.M."/>
            <person name="Wu H.C."/>
            <person name="Kim C.J."/>
            <person name="Nguyen M."/>
            <person name="Pham P.K."/>
            <person name="Cheuk R.F."/>
            <person name="Karlin-Newmann G."/>
            <person name="Liu S.X."/>
            <person name="Lam B."/>
            <person name="Sakano H."/>
            <person name="Wu T."/>
            <person name="Yu G."/>
            <person name="Miranda M."/>
            <person name="Quach H.L."/>
            <person name="Tripp M."/>
            <person name="Chang C.H."/>
            <person name="Lee J.M."/>
            <person name="Toriumi M.J."/>
            <person name="Chan M.M."/>
            <person name="Tang C.C."/>
            <person name="Onodera C.S."/>
            <person name="Deng J.M."/>
            <person name="Akiyama K."/>
            <person name="Ansari Y."/>
            <person name="Arakawa T."/>
            <person name="Banh J."/>
            <person name="Banno F."/>
            <person name="Bowser L."/>
            <person name="Brooks S.Y."/>
            <person name="Carninci P."/>
            <person name="Chao Q."/>
            <person name="Choy N."/>
            <person name="Enju A."/>
            <person name="Goldsmith A.D."/>
            <person name="Gurjal M."/>
            <person name="Hansen N.F."/>
            <person name="Hayashizaki Y."/>
            <person name="Johnson-Hopson C."/>
            <person name="Hsuan V.W."/>
            <person name="Iida K."/>
            <person name="Karnes M."/>
            <person name="Khan S."/>
            <person name="Koesema E."/>
            <person name="Ishida J."/>
            <person name="Jiang P.X."/>
            <person name="Jones T."/>
            <person name="Kawai J."/>
            <person name="Kamiya A."/>
            <person name="Meyers C."/>
            <person name="Nakajima M."/>
            <person name="Narusaka M."/>
            <person name="Seki M."/>
            <person name="Sakurai T."/>
            <person name="Satou M."/>
            <person name="Tamse R."/>
            <person name="Vaysberg M."/>
            <person name="Wallender E.K."/>
            <person name="Wong C."/>
            <person name="Yamamura Y."/>
            <person name="Yuan S."/>
            <person name="Shinozaki K."/>
            <person name="Davis R.W."/>
            <person name="Theologis A."/>
            <person name="Ecker J.R."/>
        </authorList>
    </citation>
    <scope>NUCLEOTIDE SEQUENCE [LARGE SCALE MRNA]</scope>
    <source>
        <strain>cv. Columbia</strain>
    </source>
</reference>
<reference key="4">
    <citation type="journal article" date="2007" name="Plant Cell Environ.">
        <title>Characterization and expression analysis of genes encoding alpha and beta carbonic anhydrases in Arabidopsis.</title>
        <authorList>
            <person name="Fabre N."/>
            <person name="Reiter I.M."/>
            <person name="Becuwe-Linka N."/>
            <person name="Genty B."/>
            <person name="Rumeau D."/>
        </authorList>
    </citation>
    <scope>GENE FAMILY</scope>
    <scope>NOMENCLATURE</scope>
    <source>
        <strain>cv. Columbia</strain>
    </source>
</reference>
<keyword id="KW-0150">Chloroplast</keyword>
<keyword id="KW-1015">Disulfide bond</keyword>
<keyword id="KW-0325">Glycoprotein</keyword>
<keyword id="KW-0456">Lyase</keyword>
<keyword id="KW-0479">Metal-binding</keyword>
<keyword id="KW-0934">Plastid</keyword>
<keyword id="KW-1185">Reference proteome</keyword>
<keyword id="KW-0732">Signal</keyword>
<keyword id="KW-0862">Zinc</keyword>
<organism>
    <name type="scientific">Arabidopsis thaliana</name>
    <name type="common">Mouse-ear cress</name>
    <dbReference type="NCBI Taxonomy" id="3702"/>
    <lineage>
        <taxon>Eukaryota</taxon>
        <taxon>Viridiplantae</taxon>
        <taxon>Streptophyta</taxon>
        <taxon>Embryophyta</taxon>
        <taxon>Tracheophyta</taxon>
        <taxon>Spermatophyta</taxon>
        <taxon>Magnoliopsida</taxon>
        <taxon>eudicotyledons</taxon>
        <taxon>Gunneridae</taxon>
        <taxon>Pentapetalae</taxon>
        <taxon>rosids</taxon>
        <taxon>malvids</taxon>
        <taxon>Brassicales</taxon>
        <taxon>Brassicaceae</taxon>
        <taxon>Camelineae</taxon>
        <taxon>Arabidopsis</taxon>
    </lineage>
</organism>
<feature type="signal peptide" evidence="2">
    <location>
        <begin position="1"/>
        <end position="27"/>
    </location>
</feature>
<feature type="chain" id="PRO_0000429733" description="Alpha carbonic anhydrase 7">
    <location>
        <begin position="28"/>
        <end position="275"/>
    </location>
</feature>
<feature type="domain" description="Alpha-carbonic anhydrase" evidence="3">
    <location>
        <begin position="38"/>
        <end position="272"/>
    </location>
</feature>
<feature type="active site" description="Proton acceptor" evidence="3">
    <location>
        <position position="104"/>
    </location>
</feature>
<feature type="binding site" evidence="3">
    <location>
        <position position="130"/>
    </location>
    <ligand>
        <name>Zn(2+)</name>
        <dbReference type="ChEBI" id="CHEBI:29105"/>
        <note>catalytic</note>
    </ligand>
</feature>
<feature type="binding site" evidence="3">
    <location>
        <position position="132"/>
    </location>
    <ligand>
        <name>Zn(2+)</name>
        <dbReference type="ChEBI" id="CHEBI:29105"/>
        <note>catalytic</note>
    </ligand>
</feature>
<feature type="binding site" evidence="3">
    <location>
        <position position="149"/>
    </location>
    <ligand>
        <name>Zn(2+)</name>
        <dbReference type="ChEBI" id="CHEBI:29105"/>
        <note>catalytic</note>
    </ligand>
</feature>
<feature type="binding site" evidence="1">
    <location>
        <begin position="218"/>
        <end position="219"/>
    </location>
    <ligand>
        <name>substrate</name>
    </ligand>
</feature>
<feature type="glycosylation site" description="N-linked (GlcNAc...) asparagine" evidence="2">
    <location>
        <position position="3"/>
    </location>
</feature>
<feature type="glycosylation site" description="N-linked (GlcNAc...) asparagine" evidence="2">
    <location>
        <position position="96"/>
    </location>
</feature>
<feature type="glycosylation site" description="N-linked (GlcNAc...) asparagine" evidence="2">
    <location>
        <position position="225"/>
    </location>
</feature>
<feature type="disulfide bond" evidence="1">
    <location>
        <begin position="63"/>
        <end position="222"/>
    </location>
</feature>
<dbReference type="EC" id="4.2.1.1"/>
<dbReference type="EMBL" id="AC026875">
    <property type="protein sequence ID" value="AAF79837.1"/>
    <property type="status" value="ALT_SEQ"/>
    <property type="molecule type" value="Genomic_DNA"/>
</dbReference>
<dbReference type="EMBL" id="CP002684">
    <property type="protein sequence ID" value="AEE28240.1"/>
    <property type="molecule type" value="Genomic_DNA"/>
</dbReference>
<dbReference type="EMBL" id="AY122907">
    <property type="protein sequence ID" value="AAM67440.1"/>
    <property type="molecule type" value="mRNA"/>
</dbReference>
<dbReference type="PIR" id="E86215">
    <property type="entry name" value="E86215"/>
</dbReference>
<dbReference type="RefSeq" id="NP_172287.1">
    <property type="nucleotide sequence ID" value="NM_100683.3"/>
</dbReference>
<dbReference type="SMR" id="Q8L817"/>
<dbReference type="FunCoup" id="Q8L817">
    <property type="interactions" value="49"/>
</dbReference>
<dbReference type="STRING" id="3702.Q8L817"/>
<dbReference type="GlyCosmos" id="Q8L817">
    <property type="glycosylation" value="3 sites, No reported glycans"/>
</dbReference>
<dbReference type="GlyGen" id="Q8L817">
    <property type="glycosylation" value="3 sites"/>
</dbReference>
<dbReference type="PaxDb" id="3702-AT1G08080.1"/>
<dbReference type="EnsemblPlants" id="AT1G08080.1">
    <property type="protein sequence ID" value="AT1G08080.1"/>
    <property type="gene ID" value="AT1G08080"/>
</dbReference>
<dbReference type="GeneID" id="837326"/>
<dbReference type="Gramene" id="AT1G08080.1">
    <property type="protein sequence ID" value="AT1G08080.1"/>
    <property type="gene ID" value="AT1G08080"/>
</dbReference>
<dbReference type="KEGG" id="ath:AT1G08080"/>
<dbReference type="Araport" id="AT1G08080"/>
<dbReference type="TAIR" id="AT1G08080">
    <property type="gene designation" value="ACA7"/>
</dbReference>
<dbReference type="eggNOG" id="KOG0382">
    <property type="taxonomic scope" value="Eukaryota"/>
</dbReference>
<dbReference type="HOGENOM" id="CLU_039326_0_0_1"/>
<dbReference type="InParanoid" id="Q8L817"/>
<dbReference type="OMA" id="VWRHRIN"/>
<dbReference type="OrthoDB" id="429145at2759"/>
<dbReference type="PhylomeDB" id="Q8L817"/>
<dbReference type="BioCyc" id="ARA:AT1G08080-MONOMER"/>
<dbReference type="PRO" id="PR:Q8L817"/>
<dbReference type="Proteomes" id="UP000006548">
    <property type="component" value="Chromosome 1"/>
</dbReference>
<dbReference type="ExpressionAtlas" id="Q8L817">
    <property type="expression patterns" value="baseline and differential"/>
</dbReference>
<dbReference type="GO" id="GO:0009570">
    <property type="term" value="C:chloroplast stroma"/>
    <property type="evidence" value="ECO:0007669"/>
    <property type="project" value="UniProtKB-SubCell"/>
</dbReference>
<dbReference type="GO" id="GO:0004089">
    <property type="term" value="F:carbonate dehydratase activity"/>
    <property type="evidence" value="ECO:0007669"/>
    <property type="project" value="UniProtKB-EC"/>
</dbReference>
<dbReference type="GO" id="GO:0008270">
    <property type="term" value="F:zinc ion binding"/>
    <property type="evidence" value="ECO:0007669"/>
    <property type="project" value="InterPro"/>
</dbReference>
<dbReference type="CDD" id="cd03124">
    <property type="entry name" value="alpha_CA_prokaryotic_like"/>
    <property type="match status" value="1"/>
</dbReference>
<dbReference type="FunFam" id="3.10.200.10:FF:000007">
    <property type="entry name" value="Alpha carbonic anhydrase 3"/>
    <property type="match status" value="1"/>
</dbReference>
<dbReference type="Gene3D" id="3.10.200.10">
    <property type="entry name" value="Alpha carbonic anhydrase"/>
    <property type="match status" value="1"/>
</dbReference>
<dbReference type="InterPro" id="IPR041891">
    <property type="entry name" value="Alpha_CA_prokaryot-like"/>
</dbReference>
<dbReference type="InterPro" id="IPR001148">
    <property type="entry name" value="CA_dom"/>
</dbReference>
<dbReference type="InterPro" id="IPR036398">
    <property type="entry name" value="CA_dom_sf"/>
</dbReference>
<dbReference type="InterPro" id="IPR023561">
    <property type="entry name" value="Carbonic_anhydrase_a-class"/>
</dbReference>
<dbReference type="InterPro" id="IPR018338">
    <property type="entry name" value="Carbonic_anhydrase_a-class_CS"/>
</dbReference>
<dbReference type="PANTHER" id="PTHR18952">
    <property type="entry name" value="CARBONIC ANHYDRASE"/>
    <property type="match status" value="1"/>
</dbReference>
<dbReference type="PANTHER" id="PTHR18952:SF208">
    <property type="entry name" value="CARBONIC ANHYDRASE XA-RELATED"/>
    <property type="match status" value="1"/>
</dbReference>
<dbReference type="Pfam" id="PF00194">
    <property type="entry name" value="Carb_anhydrase"/>
    <property type="match status" value="1"/>
</dbReference>
<dbReference type="SMART" id="SM01057">
    <property type="entry name" value="Carb_anhydrase"/>
    <property type="match status" value="1"/>
</dbReference>
<dbReference type="SUPFAM" id="SSF51069">
    <property type="entry name" value="Carbonic anhydrase"/>
    <property type="match status" value="1"/>
</dbReference>
<dbReference type="PROSITE" id="PS00162">
    <property type="entry name" value="ALPHA_CA_1"/>
    <property type="match status" value="1"/>
</dbReference>
<dbReference type="PROSITE" id="PS51144">
    <property type="entry name" value="ALPHA_CA_2"/>
    <property type="match status" value="1"/>
</dbReference>
<comment type="function">
    <text evidence="1">Reversible hydration of carbon dioxide.</text>
</comment>
<comment type="catalytic activity">
    <reaction>
        <text>hydrogencarbonate + H(+) = CO2 + H2O</text>
        <dbReference type="Rhea" id="RHEA:10748"/>
        <dbReference type="ChEBI" id="CHEBI:15377"/>
        <dbReference type="ChEBI" id="CHEBI:15378"/>
        <dbReference type="ChEBI" id="CHEBI:16526"/>
        <dbReference type="ChEBI" id="CHEBI:17544"/>
        <dbReference type="EC" id="4.2.1.1"/>
    </reaction>
</comment>
<comment type="cofactor">
    <cofactor evidence="1">
        <name>Zn(2+)</name>
        <dbReference type="ChEBI" id="CHEBI:29105"/>
    </cofactor>
</comment>
<comment type="subcellular location">
    <subcellularLocation>
        <location evidence="1">Plastid</location>
        <location evidence="1">Chloroplast stroma</location>
    </subcellularLocation>
    <text evidence="1">Targeted to the chloroplast via a protein-targeting pathway that uses the secretory system.</text>
</comment>
<comment type="PTM">
    <text evidence="1">N-glycosylated.</text>
</comment>
<comment type="similarity">
    <text evidence="4">Belongs to the alpha-class carbonic anhydrase family.</text>
</comment>
<comment type="sequence caution" evidence="4">
    <conflict type="erroneous gene model prediction">
        <sequence resource="EMBL-CDS" id="AAF79837"/>
    </conflict>
</comment>
<proteinExistence type="evidence at transcript level"/>
<sequence>MVNYSSISCIFFVALFSIFTIVSISSAASSHGEVEDEREFNYKKNDEKGPERWGELKPEWEMCGKGEMQSPIDLMNERVNIVSHLGRLNRDYNPSNATLKNRGHDIMLKFEDGAGTIKINGFEYELQQLHWHSPSEHTINGRRFALELHMVHEGRNRRMAVVTVLYKIGRADTFIRSLEKELEGIAEMEEAEKNVGMIDPTKIKIGSRKYYRYTGSLTTPPCTQNVTWSVVRKVRTVTRKQVKLLRVAVHDDANSNARPVQPTNKRIVHLYRPIV</sequence>
<evidence type="ECO:0000250" key="1"/>
<evidence type="ECO:0000255" key="2"/>
<evidence type="ECO:0000255" key="3">
    <source>
        <dbReference type="PROSITE-ProRule" id="PRU01134"/>
    </source>
</evidence>
<evidence type="ECO:0000305" key="4"/>
<gene>
    <name type="primary">ACA7</name>
    <name type="ordered locus">At1g08080</name>
    <name type="ORF">T6D22.16</name>
</gene>
<accession>Q8L817</accession>
<accession>Q9LN00</accession>
<protein>
    <recommendedName>
        <fullName>Alpha carbonic anhydrase 7</fullName>
        <shortName>AtaCA7</shortName>
        <shortName>AtalphaCA7</shortName>
        <ecNumber>4.2.1.1</ecNumber>
    </recommendedName>
    <alternativeName>
        <fullName>Alpha carbonate dehydratase 7</fullName>
    </alternativeName>
</protein>
<name>ATCA7_ARATH</name>